<feature type="chain" id="PRO_0000166672" description="Phosphoenolpyruvate carboxylase">
    <location>
        <begin position="1"/>
        <end position="968"/>
    </location>
</feature>
<feature type="active site" evidence="1">
    <location>
        <position position="172"/>
    </location>
</feature>
<feature type="active site" evidence="1">
    <location>
        <position position="602"/>
    </location>
</feature>
<feature type="modified residue" description="Phosphoserine" evidence="1">
    <location>
        <position position="11"/>
    </location>
</feature>
<organism>
    <name type="scientific">Phaseolus vulgaris</name>
    <name type="common">Kidney bean</name>
    <name type="synonym">French bean</name>
    <dbReference type="NCBI Taxonomy" id="3885"/>
    <lineage>
        <taxon>Eukaryota</taxon>
        <taxon>Viridiplantae</taxon>
        <taxon>Streptophyta</taxon>
        <taxon>Embryophyta</taxon>
        <taxon>Tracheophyta</taxon>
        <taxon>Spermatophyta</taxon>
        <taxon>Magnoliopsida</taxon>
        <taxon>eudicotyledons</taxon>
        <taxon>Gunneridae</taxon>
        <taxon>Pentapetalae</taxon>
        <taxon>rosids</taxon>
        <taxon>fabids</taxon>
        <taxon>Fabales</taxon>
        <taxon>Fabaceae</taxon>
        <taxon>Papilionoideae</taxon>
        <taxon>50 kb inversion clade</taxon>
        <taxon>NPAAA clade</taxon>
        <taxon>indigoferoid/millettioid clade</taxon>
        <taxon>Phaseoleae</taxon>
        <taxon>Phaseolus</taxon>
    </lineage>
</organism>
<protein>
    <recommendedName>
        <fullName>Phosphoenolpyruvate carboxylase</fullName>
        <shortName>PEPC</shortName>
        <shortName>PEPCase</shortName>
        <ecNumber>4.1.1.31</ecNumber>
    </recommendedName>
</protein>
<dbReference type="EC" id="4.1.1.31"/>
<dbReference type="EMBL" id="AF288382">
    <property type="protein sequence ID" value="AAK28444.1"/>
    <property type="molecule type" value="mRNA"/>
</dbReference>
<dbReference type="SMR" id="Q9AU12"/>
<dbReference type="ProMEX" id="Q9AU12"/>
<dbReference type="eggNOG" id="ENOG502QPVS">
    <property type="taxonomic scope" value="Eukaryota"/>
</dbReference>
<dbReference type="PhylomeDB" id="Q9AU12"/>
<dbReference type="GO" id="GO:0048046">
    <property type="term" value="C:apoplast"/>
    <property type="evidence" value="ECO:0007669"/>
    <property type="project" value="TreeGrafter"/>
</dbReference>
<dbReference type="GO" id="GO:0009507">
    <property type="term" value="C:chloroplast"/>
    <property type="evidence" value="ECO:0007669"/>
    <property type="project" value="TreeGrafter"/>
</dbReference>
<dbReference type="GO" id="GO:0005829">
    <property type="term" value="C:cytosol"/>
    <property type="evidence" value="ECO:0007669"/>
    <property type="project" value="TreeGrafter"/>
</dbReference>
<dbReference type="GO" id="GO:0008964">
    <property type="term" value="F:phosphoenolpyruvate carboxylase activity"/>
    <property type="evidence" value="ECO:0007669"/>
    <property type="project" value="UniProtKB-EC"/>
</dbReference>
<dbReference type="GO" id="GO:0015977">
    <property type="term" value="P:carbon fixation"/>
    <property type="evidence" value="ECO:0007669"/>
    <property type="project" value="UniProtKB-KW"/>
</dbReference>
<dbReference type="GO" id="GO:0048366">
    <property type="term" value="P:leaf development"/>
    <property type="evidence" value="ECO:0007669"/>
    <property type="project" value="TreeGrafter"/>
</dbReference>
<dbReference type="GO" id="GO:0015979">
    <property type="term" value="P:photosynthesis"/>
    <property type="evidence" value="ECO:0007669"/>
    <property type="project" value="UniProtKB-KW"/>
</dbReference>
<dbReference type="GO" id="GO:0006099">
    <property type="term" value="P:tricarboxylic acid cycle"/>
    <property type="evidence" value="ECO:0007669"/>
    <property type="project" value="InterPro"/>
</dbReference>
<dbReference type="FunFam" id="1.20.1440.90:FF:000001">
    <property type="entry name" value="Phosphoenolpyruvate carboxylase 1"/>
    <property type="match status" value="1"/>
</dbReference>
<dbReference type="Gene3D" id="1.20.1440.90">
    <property type="entry name" value="Phosphoenolpyruvate/pyruvate domain"/>
    <property type="match status" value="1"/>
</dbReference>
<dbReference type="HAMAP" id="MF_00595">
    <property type="entry name" value="PEPcase_type1"/>
    <property type="match status" value="1"/>
</dbReference>
<dbReference type="InterPro" id="IPR021135">
    <property type="entry name" value="PEP_COase"/>
</dbReference>
<dbReference type="InterPro" id="IPR022805">
    <property type="entry name" value="PEP_COase_bac/pln-type"/>
</dbReference>
<dbReference type="InterPro" id="IPR018129">
    <property type="entry name" value="PEP_COase_Lys_AS"/>
</dbReference>
<dbReference type="InterPro" id="IPR033129">
    <property type="entry name" value="PEPCASE_His_AS"/>
</dbReference>
<dbReference type="InterPro" id="IPR015813">
    <property type="entry name" value="Pyrv/PenolPyrv_kinase-like_dom"/>
</dbReference>
<dbReference type="NCBIfam" id="NF000584">
    <property type="entry name" value="PRK00009.1"/>
    <property type="match status" value="1"/>
</dbReference>
<dbReference type="PANTHER" id="PTHR30523">
    <property type="entry name" value="PHOSPHOENOLPYRUVATE CARBOXYLASE"/>
    <property type="match status" value="1"/>
</dbReference>
<dbReference type="PANTHER" id="PTHR30523:SF37">
    <property type="entry name" value="PHOSPHOENOLPYRUVATE CARBOXYLASE"/>
    <property type="match status" value="1"/>
</dbReference>
<dbReference type="Pfam" id="PF00311">
    <property type="entry name" value="PEPcase"/>
    <property type="match status" value="1"/>
</dbReference>
<dbReference type="PRINTS" id="PR00150">
    <property type="entry name" value="PEPCARBXLASE"/>
</dbReference>
<dbReference type="SUPFAM" id="SSF51621">
    <property type="entry name" value="Phosphoenolpyruvate/pyruvate domain"/>
    <property type="match status" value="1"/>
</dbReference>
<dbReference type="PROSITE" id="PS00781">
    <property type="entry name" value="PEPCASE_1"/>
    <property type="match status" value="1"/>
</dbReference>
<dbReference type="PROSITE" id="PS00393">
    <property type="entry name" value="PEPCASE_2"/>
    <property type="match status" value="1"/>
</dbReference>
<comment type="function">
    <text>Through the carboxylation of phosphoenolpyruvate (PEP) it forms oxaloacetate, a four-carbon dicarboxylic acid source for the tricarboxylic acid cycle.</text>
</comment>
<comment type="catalytic activity">
    <reaction>
        <text>oxaloacetate + phosphate = phosphoenolpyruvate + hydrogencarbonate</text>
        <dbReference type="Rhea" id="RHEA:28370"/>
        <dbReference type="ChEBI" id="CHEBI:16452"/>
        <dbReference type="ChEBI" id="CHEBI:17544"/>
        <dbReference type="ChEBI" id="CHEBI:43474"/>
        <dbReference type="ChEBI" id="CHEBI:58702"/>
        <dbReference type="EC" id="4.1.1.31"/>
    </reaction>
</comment>
<comment type="cofactor">
    <cofactor evidence="1">
        <name>Mg(2+)</name>
        <dbReference type="ChEBI" id="CHEBI:18420"/>
    </cofactor>
</comment>
<comment type="activity regulation">
    <text evidence="1">By light-reversible phosphorylation.</text>
</comment>
<comment type="subunit">
    <text evidence="1">Homotetramer.</text>
</comment>
<comment type="subcellular location">
    <subcellularLocation>
        <location evidence="1">Cytoplasm</location>
    </subcellularLocation>
</comment>
<comment type="similarity">
    <text evidence="2">Belongs to the PEPCase type 1 family.</text>
</comment>
<evidence type="ECO:0000250" key="1"/>
<evidence type="ECO:0000305" key="2"/>
<keyword id="KW-0021">Allosteric enzyme</keyword>
<keyword id="KW-0120">Carbon dioxide fixation</keyword>
<keyword id="KW-0963">Cytoplasm</keyword>
<keyword id="KW-0456">Lyase</keyword>
<keyword id="KW-0460">Magnesium</keyword>
<keyword id="KW-0597">Phosphoprotein</keyword>
<keyword id="KW-0602">Photosynthesis</keyword>
<name>CAPP_PHAVU</name>
<sequence length="968" mass="110709">MANRNLEKMASIDAQLRQLAPSKVSEDDKLIEYDALLLDRFLDILQNLHGEDLKETVQEVYELSAEYEGKHDPKKLEELGNVITSLDAGDSIVVAKSFSHMLNLANLAEEVQISRRRRNKLKKGDFADENNATTESDIEETLKKLVFELKKSPQEVFDALKNQTVDLVLTAHPTQSVRRSLLQKHARIRNCLSKLYAKDITPDDKQELDEALQREIQAAFRTDEIRRTPPTPQDEMRAGMSYFHETIWNGVPSFLRRVDTALNNIGIKERVPYNAPLIQFSSWMGGDRDGNPRVTPEVTRDVCLLARMMAANMYYSQIEDLMFELSMWRCNDELRVHADEVHRSSNKDEVAKHYIEFWKKVPTNEPYRVVLGEVRDRLYQTRERSRHLLSNGYSDIPEENTFTSVEEFLQPLELCYRSLCACGDRAIADGSLLDFLRQVSTFGLSIVRLDIRQESDRHTDVLDAITKHLEIGSYQEWSEEKRQEWLLSELSGKRPLFGPDLPQTEEIRDVLDTFHVIAELPPDNFGAYIISMATAPSDVLAVELLQRECHVKHPLRVVPLFEKLADLEAAPAALARLFSVDWYKNRIDGKQEVMIGYSDSGKDAGRFSAAWQLYKAQEELVKVAKKFGIKLTMFHGRGGTVGRGGGPTHLAILSQPPDTIHGSLRVTVQGEVIEQCFGEQHLCFRTLQRFTAATLEHGMNPPISPKPEWRAMMDQMAVIATEEYRSIVFKEPRFVEYFRLATPELEYGRMNIGSRPAKRRPSGGIETLRAIPWIFAWTQTRFHLPVWLGFGAAFKQVLDKNAKKNLSMLQEMYNQWPFFRVTLDLVEMVFAKGDPKIGALNDRLLVSKDLWPFGDQLRNKYEETKKLLLQVAGHKEILEGDPYLKQRLRLRHSPITTLNVFQAYTLKRIRDPNYKVKARPRISKESAEASKSADELIKLNPTSEYAPGLEDTLILTMKGIAAGMQNTG</sequence>
<accession>Q9AU12</accession>
<reference key="1">
    <citation type="submission" date="2000-07" db="EMBL/GenBank/DDBJ databases">
        <title>Sequence of a nodule enhanced French bean (Phaseolus vulgaris) cDNA.</title>
        <authorList>
            <person name="Blanco L.L."/>
            <person name="Lara F.M."/>
        </authorList>
    </citation>
    <scope>NUCLEOTIDE SEQUENCE [MRNA]</scope>
</reference>
<proteinExistence type="evidence at transcript level"/>